<feature type="chain" id="PRO_0000389879" description="Acetyl-coenzyme A carboxylase carboxyl transferase subunit beta">
    <location>
        <begin position="1"/>
        <end position="288"/>
    </location>
</feature>
<feature type="domain" description="CoA carboxyltransferase N-terminal" evidence="2">
    <location>
        <begin position="34"/>
        <end position="288"/>
    </location>
</feature>
<feature type="zinc finger region" description="C4-type" evidence="1">
    <location>
        <begin position="38"/>
        <end position="59"/>
    </location>
</feature>
<feature type="binding site" evidence="1">
    <location>
        <position position="38"/>
    </location>
    <ligand>
        <name>Zn(2+)</name>
        <dbReference type="ChEBI" id="CHEBI:29105"/>
    </ligand>
</feature>
<feature type="binding site" evidence="1">
    <location>
        <position position="41"/>
    </location>
    <ligand>
        <name>Zn(2+)</name>
        <dbReference type="ChEBI" id="CHEBI:29105"/>
    </ligand>
</feature>
<feature type="binding site" evidence="1">
    <location>
        <position position="56"/>
    </location>
    <ligand>
        <name>Zn(2+)</name>
        <dbReference type="ChEBI" id="CHEBI:29105"/>
    </ligand>
</feature>
<feature type="binding site" evidence="1">
    <location>
        <position position="59"/>
    </location>
    <ligand>
        <name>Zn(2+)</name>
        <dbReference type="ChEBI" id="CHEBI:29105"/>
    </ligand>
</feature>
<sequence>MALFRKKDKYIRITPNNSLKGSVSHNVPEVPDELFAKCPACKHMIYKKDLGLAKICPTCSYNFRISAQERLTLTVDEGSFQELFISIETKDPLRFPGYQEKLQKAKETTGLHEAVLTGKAMVKGQQIALAIMDSHFIMASMGTVVGEKITRLFELAIEENLPVVIFTASGGARMQEGIMSLMQMAKVSAAVKRHSNAGLFYLTILTDPTTGGVTASFAMEGDIILAEPQSLVGFAGRRVIETTVRENLPDDFQKAEFLQDHGFVDAIVKRTELRDKIAHLVAFHGGGQ</sequence>
<organism>
    <name type="scientific">Streptococcus pyogenes serotype M3 (strain ATCC BAA-595 / MGAS315)</name>
    <dbReference type="NCBI Taxonomy" id="198466"/>
    <lineage>
        <taxon>Bacteria</taxon>
        <taxon>Bacillati</taxon>
        <taxon>Bacillota</taxon>
        <taxon>Bacilli</taxon>
        <taxon>Lactobacillales</taxon>
        <taxon>Streptococcaceae</taxon>
        <taxon>Streptococcus</taxon>
    </lineage>
</organism>
<gene>
    <name evidence="1" type="primary">accD</name>
    <name type="ordered locus">SpyM3_1518</name>
</gene>
<name>ACCD_STRP3</name>
<protein>
    <recommendedName>
        <fullName evidence="1">Acetyl-coenzyme A carboxylase carboxyl transferase subunit beta</fullName>
        <shortName evidence="1">ACCase subunit beta</shortName>
        <shortName evidence="1">Acetyl-CoA carboxylase carboxyltransferase subunit beta</shortName>
        <ecNumber evidence="1">2.1.3.15</ecNumber>
    </recommendedName>
</protein>
<comment type="function">
    <text evidence="1">Component of the acetyl coenzyme A carboxylase (ACC) complex. Biotin carboxylase (BC) catalyzes the carboxylation of biotin on its carrier protein (BCCP) and then the CO(2) group is transferred by the transcarboxylase to acetyl-CoA to form malonyl-CoA.</text>
</comment>
<comment type="catalytic activity">
    <reaction evidence="1">
        <text>N(6)-carboxybiotinyl-L-lysyl-[protein] + acetyl-CoA = N(6)-biotinyl-L-lysyl-[protein] + malonyl-CoA</text>
        <dbReference type="Rhea" id="RHEA:54728"/>
        <dbReference type="Rhea" id="RHEA-COMP:10505"/>
        <dbReference type="Rhea" id="RHEA-COMP:10506"/>
        <dbReference type="ChEBI" id="CHEBI:57288"/>
        <dbReference type="ChEBI" id="CHEBI:57384"/>
        <dbReference type="ChEBI" id="CHEBI:83144"/>
        <dbReference type="ChEBI" id="CHEBI:83145"/>
        <dbReference type="EC" id="2.1.3.15"/>
    </reaction>
</comment>
<comment type="cofactor">
    <cofactor evidence="1">
        <name>Zn(2+)</name>
        <dbReference type="ChEBI" id="CHEBI:29105"/>
    </cofactor>
    <text evidence="1">Binds 1 zinc ion per subunit.</text>
</comment>
<comment type="pathway">
    <text evidence="1">Lipid metabolism; malonyl-CoA biosynthesis; malonyl-CoA from acetyl-CoA: step 1/1.</text>
</comment>
<comment type="subunit">
    <text evidence="1">Acetyl-CoA carboxylase is a heterohexamer composed of biotin carboxyl carrier protein (AccB), biotin carboxylase (AccC) and two subunits each of ACCase subunit alpha (AccA) and ACCase subunit beta (AccD).</text>
</comment>
<comment type="subcellular location">
    <subcellularLocation>
        <location evidence="1">Cytoplasm</location>
    </subcellularLocation>
</comment>
<comment type="similarity">
    <text evidence="1">Belongs to the AccD/PCCB family.</text>
</comment>
<accession>P0CZ44</accession>
<accession>Q79YC0</accession>
<accession>Q8K633</accession>
<reference key="1">
    <citation type="journal article" date="2002" name="Proc. Natl. Acad. Sci. U.S.A.">
        <title>Genome sequence of a serotype M3 strain of group A Streptococcus: phage-encoded toxins, the high-virulence phenotype, and clone emergence.</title>
        <authorList>
            <person name="Beres S.B."/>
            <person name="Sylva G.L."/>
            <person name="Barbian K.D."/>
            <person name="Lei B."/>
            <person name="Hoff J.S."/>
            <person name="Mammarella N.D."/>
            <person name="Liu M.-Y."/>
            <person name="Smoot J.C."/>
            <person name="Porcella S.F."/>
            <person name="Parkins L.D."/>
            <person name="Campbell D.S."/>
            <person name="Smith T.M."/>
            <person name="McCormick J.K."/>
            <person name="Leung D.Y.M."/>
            <person name="Schlievert P.M."/>
            <person name="Musser J.M."/>
        </authorList>
    </citation>
    <scope>NUCLEOTIDE SEQUENCE [LARGE SCALE GENOMIC DNA]</scope>
    <source>
        <strain>ATCC BAA-595 / MGAS315</strain>
    </source>
</reference>
<proteinExistence type="inferred from homology"/>
<dbReference type="EC" id="2.1.3.15" evidence="1"/>
<dbReference type="EMBL" id="AE014074">
    <property type="protein sequence ID" value="AAM80125.1"/>
    <property type="molecule type" value="Genomic_DNA"/>
</dbReference>
<dbReference type="RefSeq" id="WP_002993759.1">
    <property type="nucleotide sequence ID" value="NC_004070.1"/>
</dbReference>
<dbReference type="SMR" id="P0CZ44"/>
<dbReference type="KEGG" id="spg:SpyM3_1518"/>
<dbReference type="HOGENOM" id="CLU_015486_1_1_9"/>
<dbReference type="UniPathway" id="UPA00655">
    <property type="reaction ID" value="UER00711"/>
</dbReference>
<dbReference type="Proteomes" id="UP000000564">
    <property type="component" value="Chromosome"/>
</dbReference>
<dbReference type="GO" id="GO:0009317">
    <property type="term" value="C:acetyl-CoA carboxylase complex"/>
    <property type="evidence" value="ECO:0007669"/>
    <property type="project" value="InterPro"/>
</dbReference>
<dbReference type="GO" id="GO:0003989">
    <property type="term" value="F:acetyl-CoA carboxylase activity"/>
    <property type="evidence" value="ECO:0007669"/>
    <property type="project" value="InterPro"/>
</dbReference>
<dbReference type="GO" id="GO:0005524">
    <property type="term" value="F:ATP binding"/>
    <property type="evidence" value="ECO:0007669"/>
    <property type="project" value="UniProtKB-KW"/>
</dbReference>
<dbReference type="GO" id="GO:0016743">
    <property type="term" value="F:carboxyl- or carbamoyltransferase activity"/>
    <property type="evidence" value="ECO:0007669"/>
    <property type="project" value="UniProtKB-UniRule"/>
</dbReference>
<dbReference type="GO" id="GO:0008270">
    <property type="term" value="F:zinc ion binding"/>
    <property type="evidence" value="ECO:0007669"/>
    <property type="project" value="UniProtKB-UniRule"/>
</dbReference>
<dbReference type="GO" id="GO:0006633">
    <property type="term" value="P:fatty acid biosynthetic process"/>
    <property type="evidence" value="ECO:0007669"/>
    <property type="project" value="UniProtKB-KW"/>
</dbReference>
<dbReference type="GO" id="GO:2001295">
    <property type="term" value="P:malonyl-CoA biosynthetic process"/>
    <property type="evidence" value="ECO:0007669"/>
    <property type="project" value="UniProtKB-UniRule"/>
</dbReference>
<dbReference type="Gene3D" id="3.90.226.10">
    <property type="entry name" value="2-enoyl-CoA Hydratase, Chain A, domain 1"/>
    <property type="match status" value="1"/>
</dbReference>
<dbReference type="HAMAP" id="MF_01395">
    <property type="entry name" value="AcetylCoA_CT_beta"/>
    <property type="match status" value="1"/>
</dbReference>
<dbReference type="InterPro" id="IPR034733">
    <property type="entry name" value="AcCoA_carboxyl_beta"/>
</dbReference>
<dbReference type="InterPro" id="IPR000438">
    <property type="entry name" value="Acetyl_CoA_COase_Trfase_b_su"/>
</dbReference>
<dbReference type="InterPro" id="IPR029045">
    <property type="entry name" value="ClpP/crotonase-like_dom_sf"/>
</dbReference>
<dbReference type="InterPro" id="IPR011762">
    <property type="entry name" value="COA_CT_N"/>
</dbReference>
<dbReference type="NCBIfam" id="TIGR00515">
    <property type="entry name" value="accD"/>
    <property type="match status" value="1"/>
</dbReference>
<dbReference type="PANTHER" id="PTHR42995">
    <property type="entry name" value="ACETYL-COENZYME A CARBOXYLASE CARBOXYL TRANSFERASE SUBUNIT BETA, CHLOROPLASTIC"/>
    <property type="match status" value="1"/>
</dbReference>
<dbReference type="PANTHER" id="PTHR42995:SF5">
    <property type="entry name" value="ACETYL-COENZYME A CARBOXYLASE CARBOXYL TRANSFERASE SUBUNIT BETA, CHLOROPLASTIC"/>
    <property type="match status" value="1"/>
</dbReference>
<dbReference type="Pfam" id="PF01039">
    <property type="entry name" value="Carboxyl_trans"/>
    <property type="match status" value="1"/>
</dbReference>
<dbReference type="PRINTS" id="PR01070">
    <property type="entry name" value="ACCCTRFRASEB"/>
</dbReference>
<dbReference type="SUPFAM" id="SSF52096">
    <property type="entry name" value="ClpP/crotonase"/>
    <property type="match status" value="1"/>
</dbReference>
<dbReference type="PROSITE" id="PS50980">
    <property type="entry name" value="COA_CT_NTER"/>
    <property type="match status" value="1"/>
</dbReference>
<keyword id="KW-0067">ATP-binding</keyword>
<keyword id="KW-0963">Cytoplasm</keyword>
<keyword id="KW-0275">Fatty acid biosynthesis</keyword>
<keyword id="KW-0276">Fatty acid metabolism</keyword>
<keyword id="KW-0444">Lipid biosynthesis</keyword>
<keyword id="KW-0443">Lipid metabolism</keyword>
<keyword id="KW-0479">Metal-binding</keyword>
<keyword id="KW-0547">Nucleotide-binding</keyword>
<keyword id="KW-0808">Transferase</keyword>
<keyword id="KW-0862">Zinc</keyword>
<keyword id="KW-0863">Zinc-finger</keyword>
<evidence type="ECO:0000255" key="1">
    <source>
        <dbReference type="HAMAP-Rule" id="MF_01395"/>
    </source>
</evidence>
<evidence type="ECO:0000255" key="2">
    <source>
        <dbReference type="PROSITE-ProRule" id="PRU01136"/>
    </source>
</evidence>